<accession>Q6PBC1</accession>
<accession>Q28F08</accession>
<protein>
    <recommendedName>
        <fullName evidence="2">Large ribosomal subunit protein uL29</fullName>
    </recommendedName>
    <alternativeName>
        <fullName>60S ribosomal protein L35</fullName>
    </alternativeName>
</protein>
<dbReference type="EMBL" id="CR762237">
    <property type="protein sequence ID" value="CAJ83539.1"/>
    <property type="molecule type" value="mRNA"/>
</dbReference>
<dbReference type="EMBL" id="BC059774">
    <property type="protein sequence ID" value="AAH59774.1"/>
    <property type="molecule type" value="mRNA"/>
</dbReference>
<dbReference type="EMBL" id="BC077011">
    <property type="protein sequence ID" value="AAH77011.1"/>
    <property type="molecule type" value="mRNA"/>
</dbReference>
<dbReference type="RefSeq" id="NP_988916.1">
    <property type="nucleotide sequence ID" value="NM_203585.1"/>
</dbReference>
<dbReference type="SMR" id="Q6PBC1"/>
<dbReference type="FunCoup" id="Q6PBC1">
    <property type="interactions" value="1954"/>
</dbReference>
<dbReference type="STRING" id="8364.ENSXETP00000011035"/>
<dbReference type="PaxDb" id="8364-ENSXETP00000036714"/>
<dbReference type="DNASU" id="394512"/>
<dbReference type="GeneID" id="394512"/>
<dbReference type="KEGG" id="xtr:394512"/>
<dbReference type="AGR" id="Xenbase:XB-GENE-969827"/>
<dbReference type="CTD" id="11224"/>
<dbReference type="Xenbase" id="XB-GENE-969827">
    <property type="gene designation" value="rpl35"/>
</dbReference>
<dbReference type="eggNOG" id="KOG3436">
    <property type="taxonomic scope" value="Eukaryota"/>
</dbReference>
<dbReference type="HOGENOM" id="CLU_110381_1_1_1"/>
<dbReference type="InParanoid" id="Q6PBC1"/>
<dbReference type="OMA" id="VMNQKAR"/>
<dbReference type="OrthoDB" id="528635at2759"/>
<dbReference type="Reactome" id="R-XTR-156827">
    <property type="pathway name" value="L13a-mediated translational silencing of Ceruloplasmin expression"/>
</dbReference>
<dbReference type="Reactome" id="R-XTR-1799339">
    <property type="pathway name" value="SRP-dependent cotranslational protein targeting to membrane"/>
</dbReference>
<dbReference type="Reactome" id="R-XTR-6791226">
    <property type="pathway name" value="Major pathway of rRNA processing in the nucleolus and cytosol"/>
</dbReference>
<dbReference type="Reactome" id="R-XTR-72689">
    <property type="pathway name" value="Formation of a pool of free 40S subunits"/>
</dbReference>
<dbReference type="Reactome" id="R-XTR-72706">
    <property type="pathway name" value="GTP hydrolysis and joining of the 60S ribosomal subunit"/>
</dbReference>
<dbReference type="Reactome" id="R-XTR-975956">
    <property type="pathway name" value="Nonsense Mediated Decay (NMD) independent of the Exon Junction Complex (EJC)"/>
</dbReference>
<dbReference type="Reactome" id="R-XTR-975957">
    <property type="pathway name" value="Nonsense Mediated Decay (NMD) enhanced by the Exon Junction Complex (EJC)"/>
</dbReference>
<dbReference type="Proteomes" id="UP000008143">
    <property type="component" value="Chromosome 8"/>
</dbReference>
<dbReference type="GO" id="GO:0022625">
    <property type="term" value="C:cytosolic large ribosomal subunit"/>
    <property type="evidence" value="ECO:0007669"/>
    <property type="project" value="InterPro"/>
</dbReference>
<dbReference type="GO" id="GO:0003735">
    <property type="term" value="F:structural constituent of ribosome"/>
    <property type="evidence" value="ECO:0007669"/>
    <property type="project" value="InterPro"/>
</dbReference>
<dbReference type="GO" id="GO:0000463">
    <property type="term" value="P:maturation of LSU-rRNA from tricistronic rRNA transcript (SSU-rRNA, 5.8S rRNA, LSU-rRNA)"/>
    <property type="evidence" value="ECO:0007669"/>
    <property type="project" value="InterPro"/>
</dbReference>
<dbReference type="GO" id="GO:0006412">
    <property type="term" value="P:translation"/>
    <property type="evidence" value="ECO:0007669"/>
    <property type="project" value="InterPro"/>
</dbReference>
<dbReference type="CDD" id="cd00427">
    <property type="entry name" value="Ribosomal_L29_HIP"/>
    <property type="match status" value="1"/>
</dbReference>
<dbReference type="FunFam" id="1.10.287.310:FF:000002">
    <property type="entry name" value="60S ribosomal protein L35"/>
    <property type="match status" value="1"/>
</dbReference>
<dbReference type="FunFam" id="6.10.250.3450:FF:000001">
    <property type="entry name" value="60S ribosomal protein L35"/>
    <property type="match status" value="1"/>
</dbReference>
<dbReference type="Gene3D" id="1.10.287.310">
    <property type="match status" value="1"/>
</dbReference>
<dbReference type="Gene3D" id="6.10.250.3450">
    <property type="match status" value="1"/>
</dbReference>
<dbReference type="HAMAP" id="MF_00374">
    <property type="entry name" value="Ribosomal_uL29"/>
    <property type="match status" value="1"/>
</dbReference>
<dbReference type="InterPro" id="IPR001854">
    <property type="entry name" value="Ribosomal_uL29"/>
</dbReference>
<dbReference type="InterPro" id="IPR018254">
    <property type="entry name" value="Ribosomal_uL29_CS"/>
</dbReference>
<dbReference type="InterPro" id="IPR045059">
    <property type="entry name" value="Ribosomal_uL29_euk"/>
</dbReference>
<dbReference type="InterPro" id="IPR036049">
    <property type="entry name" value="Ribosomal_uL29_sf"/>
</dbReference>
<dbReference type="NCBIfam" id="TIGR00012">
    <property type="entry name" value="L29"/>
    <property type="match status" value="1"/>
</dbReference>
<dbReference type="PANTHER" id="PTHR45722">
    <property type="entry name" value="60S RIBOSOMAL PROTEIN L35"/>
    <property type="match status" value="1"/>
</dbReference>
<dbReference type="PANTHER" id="PTHR45722:SF2">
    <property type="entry name" value="LARGE RIBOSOMAL SUBUNIT PROTEIN UL29-RELATED"/>
    <property type="match status" value="1"/>
</dbReference>
<dbReference type="Pfam" id="PF00831">
    <property type="entry name" value="Ribosomal_L29"/>
    <property type="match status" value="1"/>
</dbReference>
<dbReference type="SUPFAM" id="SSF46561">
    <property type="entry name" value="Ribosomal protein L29 (L29p)"/>
    <property type="match status" value="1"/>
</dbReference>
<dbReference type="PROSITE" id="PS00579">
    <property type="entry name" value="RIBOSOMAL_L29"/>
    <property type="match status" value="1"/>
</dbReference>
<keyword id="KW-0963">Cytoplasm</keyword>
<keyword id="KW-1185">Reference proteome</keyword>
<keyword id="KW-0687">Ribonucleoprotein</keyword>
<keyword id="KW-0689">Ribosomal protein</keyword>
<reference key="1">
    <citation type="submission" date="2006-03" db="EMBL/GenBank/DDBJ databases">
        <authorList>
            <consortium name="Sanger Xenopus tropicalis EST/cDNA project"/>
        </authorList>
    </citation>
    <scope>NUCLEOTIDE SEQUENCE [LARGE SCALE MRNA]</scope>
    <source>
        <tissue>Gastrula</tissue>
    </source>
</reference>
<reference key="2">
    <citation type="submission" date="2004-07" db="EMBL/GenBank/DDBJ databases">
        <authorList>
            <consortium name="NIH - Xenopus Gene Collection (XGC) project"/>
        </authorList>
    </citation>
    <scope>NUCLEOTIDE SEQUENCE [LARGE SCALE MRNA]</scope>
    <source>
        <tissue>Embryo</tissue>
    </source>
</reference>
<evidence type="ECO:0000250" key="1">
    <source>
        <dbReference type="UniProtKB" id="P42766"/>
    </source>
</evidence>
<evidence type="ECO:0000305" key="2"/>
<name>RL35_XENTR</name>
<organism>
    <name type="scientific">Xenopus tropicalis</name>
    <name type="common">Western clawed frog</name>
    <name type="synonym">Silurana tropicalis</name>
    <dbReference type="NCBI Taxonomy" id="8364"/>
    <lineage>
        <taxon>Eukaryota</taxon>
        <taxon>Metazoa</taxon>
        <taxon>Chordata</taxon>
        <taxon>Craniata</taxon>
        <taxon>Vertebrata</taxon>
        <taxon>Euteleostomi</taxon>
        <taxon>Amphibia</taxon>
        <taxon>Batrachia</taxon>
        <taxon>Anura</taxon>
        <taxon>Pipoidea</taxon>
        <taxon>Pipidae</taxon>
        <taxon>Xenopodinae</taxon>
        <taxon>Xenopus</taxon>
        <taxon>Silurana</taxon>
    </lineage>
</organism>
<proteinExistence type="evidence at transcript level"/>
<sequence length="123" mass="14406">MAKIKARDLRGKKKEELLKQLDDLKVELSQLRVAKVTGGAASKLSKIRVVRKSIARVLTVINQTQKENLRKFYKGKKYKPLDLRPKKTRALRRRLNKHEEGLRTKKQQRKDRLFSARKFAVKA</sequence>
<comment type="function">
    <text evidence="1">Component of the large ribosomal subunit. The ribosome is a large ribonucleoprotein complex responsible for the synthesis of proteins in the cell.</text>
</comment>
<comment type="subunit">
    <text evidence="1">Component of the large ribosomal subunit.</text>
</comment>
<comment type="subcellular location">
    <subcellularLocation>
        <location evidence="1">Cytoplasm</location>
    </subcellularLocation>
</comment>
<comment type="similarity">
    <text evidence="2">Belongs to the universal ribosomal protein uL29 family.</text>
</comment>
<feature type="chain" id="PRO_0000130542" description="Large ribosomal subunit protein uL29">
    <location>
        <begin position="1"/>
        <end position="123"/>
    </location>
</feature>
<gene>
    <name type="primary">rpl35</name>
    <name type="ORF">TGas044l18.1</name>
</gene>